<evidence type="ECO:0000250" key="1"/>
<evidence type="ECO:0000250" key="2">
    <source>
        <dbReference type="UniProtKB" id="P06858"/>
    </source>
</evidence>
<evidence type="ECO:0000250" key="3">
    <source>
        <dbReference type="UniProtKB" id="P11151"/>
    </source>
</evidence>
<evidence type="ECO:0000250" key="4">
    <source>
        <dbReference type="UniProtKB" id="Q06000"/>
    </source>
</evidence>
<evidence type="ECO:0000255" key="5"/>
<evidence type="ECO:0000255" key="6">
    <source>
        <dbReference type="PROSITE-ProRule" id="PRU00152"/>
    </source>
</evidence>
<evidence type="ECO:0000255" key="7">
    <source>
        <dbReference type="PROSITE-ProRule" id="PRU10037"/>
    </source>
</evidence>
<evidence type="ECO:0000269" key="8">
    <source>
    </source>
</evidence>
<evidence type="ECO:0000305" key="9"/>
<name>LIPL_NEOVI</name>
<organism>
    <name type="scientific">Neovison vison</name>
    <name type="common">American mink</name>
    <name type="synonym">Mustela vison</name>
    <dbReference type="NCBI Taxonomy" id="452646"/>
    <lineage>
        <taxon>Eukaryota</taxon>
        <taxon>Metazoa</taxon>
        <taxon>Chordata</taxon>
        <taxon>Craniata</taxon>
        <taxon>Vertebrata</taxon>
        <taxon>Euteleostomi</taxon>
        <taxon>Mammalia</taxon>
        <taxon>Eutheria</taxon>
        <taxon>Laurasiatheria</taxon>
        <taxon>Carnivora</taxon>
        <taxon>Caniformia</taxon>
        <taxon>Musteloidea</taxon>
        <taxon>Mustelidae</taxon>
        <taxon>Mustelinae</taxon>
        <taxon>Neogale</taxon>
    </lineage>
</organism>
<feature type="signal peptide" evidence="1">
    <location>
        <begin position="1"/>
        <end position="27"/>
    </location>
</feature>
<feature type="chain" id="PRO_0000017777" description="Lipoprotein lipase">
    <location>
        <begin position="28"/>
        <end position="475"/>
    </location>
</feature>
<feature type="domain" description="PLAT" evidence="6">
    <location>
        <begin position="341"/>
        <end position="464"/>
    </location>
</feature>
<feature type="region of interest" description="Interaction with GPIHBP1" evidence="2">
    <location>
        <begin position="32"/>
        <end position="53"/>
    </location>
</feature>
<feature type="region of interest" description="Important for interaction with lipoprotein particles" evidence="2">
    <location>
        <begin position="417"/>
        <end position="421"/>
    </location>
</feature>
<feature type="region of interest" description="Important for heparin binding" evidence="2">
    <location>
        <begin position="430"/>
        <end position="434"/>
    </location>
</feature>
<feature type="region of interest" description="Interaction with GPIHBP1" evidence="2">
    <location>
        <begin position="443"/>
        <end position="467"/>
    </location>
</feature>
<feature type="active site" description="Nucleophile" evidence="2">
    <location>
        <position position="159"/>
    </location>
</feature>
<feature type="active site" description="Charge relay system" evidence="7">
    <location>
        <position position="183"/>
    </location>
</feature>
<feature type="active site" description="Charge relay system" evidence="7">
    <location>
        <position position="268"/>
    </location>
</feature>
<feature type="binding site" evidence="2">
    <location>
        <position position="194"/>
    </location>
    <ligand>
        <name>Ca(2+)</name>
        <dbReference type="ChEBI" id="CHEBI:29108"/>
    </ligand>
</feature>
<feature type="binding site" evidence="2">
    <location>
        <position position="197"/>
    </location>
    <ligand>
        <name>Ca(2+)</name>
        <dbReference type="ChEBI" id="CHEBI:29108"/>
    </ligand>
</feature>
<feature type="binding site" evidence="2">
    <location>
        <position position="199"/>
    </location>
    <ligand>
        <name>Ca(2+)</name>
        <dbReference type="ChEBI" id="CHEBI:29108"/>
    </ligand>
</feature>
<feature type="binding site" evidence="2">
    <location>
        <position position="202"/>
    </location>
    <ligand>
        <name>Ca(2+)</name>
        <dbReference type="ChEBI" id="CHEBI:29108"/>
    </ligand>
</feature>
<feature type="modified residue" description="3'-nitrotyrosine" evidence="4">
    <location>
        <position position="121"/>
    </location>
</feature>
<feature type="modified residue" description="3'-nitrotyrosine" evidence="4">
    <location>
        <position position="191"/>
    </location>
</feature>
<feature type="modified residue" description="3'-nitrotyrosine" evidence="4">
    <location>
        <position position="343"/>
    </location>
</feature>
<feature type="glycosylation site" description="N-linked (GlcNAc...) asparagine" evidence="5">
    <location>
        <position position="70"/>
    </location>
</feature>
<feature type="glycosylation site" description="N-linked (GlcNAc...) asparagine" evidence="5">
    <location>
        <position position="386"/>
    </location>
</feature>
<feature type="disulfide bond" evidence="6">
    <location>
        <begin position="54"/>
        <end position="67"/>
    </location>
</feature>
<feature type="disulfide bond" evidence="6">
    <location>
        <begin position="243"/>
        <end position="266"/>
    </location>
</feature>
<feature type="disulfide bond" evidence="6">
    <location>
        <begin position="291"/>
        <end position="310"/>
    </location>
</feature>
<feature type="disulfide bond" evidence="6">
    <location>
        <begin position="302"/>
        <end position="305"/>
    </location>
</feature>
<feature type="disulfide bond" evidence="6">
    <location>
        <begin position="445"/>
        <end position="465"/>
    </location>
</feature>
<feature type="sequence variant" description="In chylomicronemia syndrome; no lipase activity." evidence="8">
    <original>P</original>
    <variation>L</variation>
    <location>
        <position position="241"/>
    </location>
</feature>
<accession>O46647</accession>
<gene>
    <name type="primary">LPL</name>
</gene>
<protein>
    <recommendedName>
        <fullName>Lipoprotein lipase</fullName>
        <shortName>LPL</shortName>
        <ecNumber evidence="3">3.1.1.34</ecNumber>
    </recommendedName>
</protein>
<keyword id="KW-0106">Calcium</keyword>
<keyword id="KW-1003">Cell membrane</keyword>
<keyword id="KW-0162">Chylomicron</keyword>
<keyword id="KW-0225">Disease variant</keyword>
<keyword id="KW-1015">Disulfide bond</keyword>
<keyword id="KW-0272">Extracellular matrix</keyword>
<keyword id="KW-0325">Glycoprotein</keyword>
<keyword id="KW-0358">Heparin-binding</keyword>
<keyword id="KW-0378">Hydrolase</keyword>
<keyword id="KW-0380">Hyperlipidemia</keyword>
<keyword id="KW-0442">Lipid degradation</keyword>
<keyword id="KW-0443">Lipid metabolism</keyword>
<keyword id="KW-0472">Membrane</keyword>
<keyword id="KW-0479">Metal-binding</keyword>
<keyword id="KW-0944">Nitration</keyword>
<keyword id="KW-1185">Reference proteome</keyword>
<keyword id="KW-0964">Secreted</keyword>
<keyword id="KW-0732">Signal</keyword>
<keyword id="KW-0850">VLDL</keyword>
<reference key="1">
    <citation type="journal article" date="1998" name="Int. J. Mol. Med.">
        <title>A mutation in the lipoprotein lipase gene associated with hyperlipoproteinemia type I in mink: studies on lipid and lipase levels in heterozygotes.</title>
        <authorList>
            <person name="Lindberg A."/>
            <person name="Nordstoga K."/>
            <person name="Christophersen B."/>
            <person name="Savonen R."/>
            <person name="van Tol A."/>
            <person name="Olivecrona G."/>
        </authorList>
    </citation>
    <scope>NUCLEOTIDE SEQUENCE [GENOMIC DNA]</scope>
    <scope>FUNCTION</scope>
    <scope>VARIANT CHYLOMICRONEMIA SYNDROME LEU-241</scope>
    <source>
        <tissue>Heart</tissue>
    </source>
</reference>
<comment type="function">
    <text evidence="2 8">Key enzyme in triglyceride metabolism. Catalyzes the hydrolysis of triglycerides from circulating chylomicrons and very low density lipoproteins (VLDL), and thereby plays an important role in lipid clearance from the blood stream, lipid utilization and storage (PubMed:9852258). Mediates margination of triglyceride-rich lipoprotein particles in capillaries. Recruited to its site of action on the luminal surface of vascular endothelium by binding to GPIHBP1 and cell surface heparan sulfate proteoglycans (By similarity).</text>
</comment>
<comment type="catalytic activity">
    <reaction evidence="3">
        <text>a triacylglycerol + H2O = a diacylglycerol + a fatty acid + H(+)</text>
        <dbReference type="Rhea" id="RHEA:12044"/>
        <dbReference type="ChEBI" id="CHEBI:15377"/>
        <dbReference type="ChEBI" id="CHEBI:15378"/>
        <dbReference type="ChEBI" id="CHEBI:17855"/>
        <dbReference type="ChEBI" id="CHEBI:18035"/>
        <dbReference type="ChEBI" id="CHEBI:28868"/>
        <dbReference type="EC" id="3.1.1.34"/>
    </reaction>
</comment>
<comment type="activity regulation">
    <text evidence="2 3">The apolipoprotein APOC2 acts as a coactivator of LPL activity (By similarity). Ca(2+) binding promotes protein stability and formation of the active homodimer. Interaction with GPIHBP1 protects LPL against inactivation by ANGPTL4 (By similarity).</text>
</comment>
<comment type="subunit">
    <text evidence="2 3">Homodimer. Interacts with GPIHBP1 with 1:1 stoichiometry (By similarity). Interacts with APOC2; the interaction activates LPL activity in the presence of lipids (By similarity). Interaction with heparan sulfate proteoglycans is required to protect LPL against loss of activity. Associates with lipoprotein particles in blood plasma. Interacts with LMF1 and SEL1L; interaction with SEL1L is required to prevent aggregation of newly synthesized LPL in the endoplasmic reticulum (ER), and for normal export of LPL from the ER to the extracellular space (By similarity). Interacts with SORL1; SORL1 acts as a sorting receptor, promoting LPL localization to endosomes and later to lysosomes, leading to degradation of newly synthesized LPL (By similarity).</text>
</comment>
<comment type="subcellular location">
    <subcellularLocation>
        <location evidence="3">Cell membrane</location>
        <topology evidence="3">Peripheral membrane protein</topology>
        <orientation evidence="3">Extracellular side</orientation>
    </subcellularLocation>
    <subcellularLocation>
        <location evidence="3">Secreted</location>
    </subcellularLocation>
    <subcellularLocation>
        <location evidence="3">Secreted</location>
        <location evidence="3">Extracellular space</location>
        <location evidence="3">Extracellular matrix</location>
    </subcellularLocation>
    <text evidence="3">Newly synthesized LPL binds to cell surface heparan proteoglycans and is then released by heparanase. Subsequently, it becomes attached to heparan proteoglycan on endothelial cells. Locates to the plasma membrane of microvilli of hepatocytes with triglyceride-rich lipoproteins (TRL). Some of the bound LPL is then internalized and located inside non-coated endocytic vesicles.</text>
</comment>
<comment type="PTM">
    <text evidence="4">Tyrosine nitration after lipopolysaccharide (LPS) challenge down-regulates the lipase activity.</text>
</comment>
<comment type="disease">
    <text evidence="8">Defects in LPL are a cause of chylomicronemia syndrome, also known as type I hyperlipoproteinemia.</text>
</comment>
<comment type="similarity">
    <text evidence="9">Belongs to the AB hydrolase superfamily. Lipase family.</text>
</comment>
<proteinExistence type="evidence at protein level"/>
<dbReference type="EC" id="3.1.1.34" evidence="3"/>
<dbReference type="EMBL" id="AJ223493">
    <property type="protein sequence ID" value="CAA11411.1"/>
    <property type="molecule type" value="Genomic_DNA"/>
</dbReference>
<dbReference type="RefSeq" id="XP_044081162.1">
    <property type="nucleotide sequence ID" value="XM_044225227.1"/>
</dbReference>
<dbReference type="SMR" id="O46647"/>
<dbReference type="ESTHER" id="musvi-lipli">
    <property type="family name" value="Lipoprotein_Lipase"/>
</dbReference>
<dbReference type="GlyCosmos" id="O46647">
    <property type="glycosylation" value="2 sites, No reported glycans"/>
</dbReference>
<dbReference type="GeneID" id="122889806"/>
<dbReference type="Proteomes" id="UP000694425">
    <property type="component" value="Unplaced"/>
</dbReference>
<dbReference type="GO" id="GO:0042627">
    <property type="term" value="C:chylomicron"/>
    <property type="evidence" value="ECO:0007669"/>
    <property type="project" value="UniProtKB-KW"/>
</dbReference>
<dbReference type="GO" id="GO:0005615">
    <property type="term" value="C:extracellular space"/>
    <property type="evidence" value="ECO:0000250"/>
    <property type="project" value="UniProtKB"/>
</dbReference>
<dbReference type="GO" id="GO:0005886">
    <property type="term" value="C:plasma membrane"/>
    <property type="evidence" value="ECO:0007669"/>
    <property type="project" value="UniProtKB-SubCell"/>
</dbReference>
<dbReference type="GO" id="GO:0034361">
    <property type="term" value="C:very-low-density lipoprotein particle"/>
    <property type="evidence" value="ECO:0007669"/>
    <property type="project" value="UniProtKB-KW"/>
</dbReference>
<dbReference type="GO" id="GO:0034185">
    <property type="term" value="F:apolipoprotein binding"/>
    <property type="evidence" value="ECO:0007669"/>
    <property type="project" value="TreeGrafter"/>
</dbReference>
<dbReference type="GO" id="GO:0043395">
    <property type="term" value="F:heparan sulfate proteoglycan binding"/>
    <property type="evidence" value="ECO:0000250"/>
    <property type="project" value="UniProtKB"/>
</dbReference>
<dbReference type="GO" id="GO:0008201">
    <property type="term" value="F:heparin binding"/>
    <property type="evidence" value="ECO:0000250"/>
    <property type="project" value="UniProtKB"/>
</dbReference>
<dbReference type="GO" id="GO:0004465">
    <property type="term" value="F:lipoprotein lipase activity"/>
    <property type="evidence" value="ECO:0000250"/>
    <property type="project" value="UniProtKB"/>
</dbReference>
<dbReference type="GO" id="GO:0071813">
    <property type="term" value="F:lipoprotein particle binding"/>
    <property type="evidence" value="ECO:0000250"/>
    <property type="project" value="UniProtKB"/>
</dbReference>
<dbReference type="GO" id="GO:0046872">
    <property type="term" value="F:metal ion binding"/>
    <property type="evidence" value="ECO:0007669"/>
    <property type="project" value="UniProtKB-KW"/>
</dbReference>
<dbReference type="GO" id="GO:0034371">
    <property type="term" value="P:chylomicron remodeling"/>
    <property type="evidence" value="ECO:0000250"/>
    <property type="project" value="UniProtKB"/>
</dbReference>
<dbReference type="GO" id="GO:0006631">
    <property type="term" value="P:fatty acid metabolic process"/>
    <property type="evidence" value="ECO:0000250"/>
    <property type="project" value="UniProtKB"/>
</dbReference>
<dbReference type="GO" id="GO:0009749">
    <property type="term" value="P:response to glucose"/>
    <property type="evidence" value="ECO:0000250"/>
    <property type="project" value="AgBase"/>
</dbReference>
<dbReference type="GO" id="GO:0019433">
    <property type="term" value="P:triglyceride catabolic process"/>
    <property type="evidence" value="ECO:0000250"/>
    <property type="project" value="UniProtKB"/>
</dbReference>
<dbReference type="GO" id="GO:0034372">
    <property type="term" value="P:very-low-density lipoprotein particle remodeling"/>
    <property type="evidence" value="ECO:0007669"/>
    <property type="project" value="TreeGrafter"/>
</dbReference>
<dbReference type="CDD" id="cd00707">
    <property type="entry name" value="Pancreat_lipase_like"/>
    <property type="match status" value="1"/>
</dbReference>
<dbReference type="CDD" id="cd01758">
    <property type="entry name" value="PLAT_LPL"/>
    <property type="match status" value="1"/>
</dbReference>
<dbReference type="FunFam" id="2.60.60.20:FF:000006">
    <property type="entry name" value="Lipoprotein lipase"/>
    <property type="match status" value="1"/>
</dbReference>
<dbReference type="FunFam" id="3.40.50.1820:FF:000031">
    <property type="entry name" value="Lipoprotein lipase"/>
    <property type="match status" value="1"/>
</dbReference>
<dbReference type="Gene3D" id="3.40.50.1820">
    <property type="entry name" value="alpha/beta hydrolase"/>
    <property type="match status" value="1"/>
</dbReference>
<dbReference type="Gene3D" id="2.60.60.20">
    <property type="entry name" value="PLAT/LH2 domain"/>
    <property type="match status" value="1"/>
</dbReference>
<dbReference type="InterPro" id="IPR029058">
    <property type="entry name" value="AB_hydrolase_fold"/>
</dbReference>
<dbReference type="InterPro" id="IPR013818">
    <property type="entry name" value="Lipase"/>
</dbReference>
<dbReference type="InterPro" id="IPR016272">
    <property type="entry name" value="Lipase_LIPH"/>
</dbReference>
<dbReference type="InterPro" id="IPR033906">
    <property type="entry name" value="Lipase_N"/>
</dbReference>
<dbReference type="InterPro" id="IPR002330">
    <property type="entry name" value="Lipo_Lipase"/>
</dbReference>
<dbReference type="InterPro" id="IPR001024">
    <property type="entry name" value="PLAT/LH2_dom"/>
</dbReference>
<dbReference type="InterPro" id="IPR036392">
    <property type="entry name" value="PLAT/LH2_dom_sf"/>
</dbReference>
<dbReference type="InterPro" id="IPR000734">
    <property type="entry name" value="TAG_lipase"/>
</dbReference>
<dbReference type="NCBIfam" id="TIGR03230">
    <property type="entry name" value="lipo_lipase"/>
    <property type="match status" value="1"/>
</dbReference>
<dbReference type="PANTHER" id="PTHR11610">
    <property type="entry name" value="LIPASE"/>
    <property type="match status" value="1"/>
</dbReference>
<dbReference type="PANTHER" id="PTHR11610:SF3">
    <property type="entry name" value="LIPOPROTEIN LIPASE"/>
    <property type="match status" value="1"/>
</dbReference>
<dbReference type="Pfam" id="PF00151">
    <property type="entry name" value="Lipase"/>
    <property type="match status" value="1"/>
</dbReference>
<dbReference type="Pfam" id="PF01477">
    <property type="entry name" value="PLAT"/>
    <property type="match status" value="1"/>
</dbReference>
<dbReference type="PIRSF" id="PIRSF000865">
    <property type="entry name" value="Lipoprotein_lipase_LIPH"/>
    <property type="match status" value="1"/>
</dbReference>
<dbReference type="PRINTS" id="PR00822">
    <property type="entry name" value="LIPOLIPASE"/>
</dbReference>
<dbReference type="PRINTS" id="PR00821">
    <property type="entry name" value="TAGLIPASE"/>
</dbReference>
<dbReference type="SMART" id="SM00308">
    <property type="entry name" value="LH2"/>
    <property type="match status" value="1"/>
</dbReference>
<dbReference type="SUPFAM" id="SSF53474">
    <property type="entry name" value="alpha/beta-Hydrolases"/>
    <property type="match status" value="1"/>
</dbReference>
<dbReference type="SUPFAM" id="SSF49723">
    <property type="entry name" value="Lipase/lipooxygenase domain (PLAT/LH2 domain)"/>
    <property type="match status" value="1"/>
</dbReference>
<dbReference type="PROSITE" id="PS00120">
    <property type="entry name" value="LIPASE_SER"/>
    <property type="match status" value="1"/>
</dbReference>
<dbReference type="PROSITE" id="PS50095">
    <property type="entry name" value="PLAT"/>
    <property type="match status" value="1"/>
</dbReference>
<sequence>MESKALLLVALGMWFQSLTATRGGVAAADRGGDFIDIESKFALRTPEDTAEDTCHLIPGVTESVANCHFNHSSKTFVVIHGWTVTGMYESWVPKLVAALYKREPDSNVIVVDWLSRAQQHYPVSAGYTKLVGKDVAKFINWMAEEFHYPLDNVHLLGYSLGAHAAGIAGSLTNKKVNRITGLDPAGPNFEYAEAPSRLSPDDADFVDVLHTFTRGSPGRSIGIQKPVGHVDIYPNGGTFQPGCNIGEAIRVIAERGLGDVDQLVKCSHERSIHLFIDSLLNEENPSKAYRCNSKEAFEKGLCLSCRKNRCNNLGYEINKVRAKRSSKMYLKTRSQMPYKVFHYQVKIHFSGTESDTQTNQAFEISLYGTVAESENIPFTLPEVSANKTYSFLIYTEVDIGELLMLKLKWKSDSYFSWSDWWSSPGFAIEKIRVKAGETQKKVIFCSREKVSHLQKGKASVVFVKCHDKSLNKKSG</sequence>